<accession>Q9LI00</accession>
<accession>A0A0P0WRR6</accession>
<accession>Q7FRX8</accession>
<proteinExistence type="evidence at transcript level"/>
<protein>
    <recommendedName>
        <fullName>6-phosphogluconate dehydrogenase, decarboxylating 1</fullName>
        <shortName>OsG6PGH1</shortName>
        <ecNumber>1.1.1.44</ecNumber>
    </recommendedName>
</protein>
<evidence type="ECO:0000250" key="1"/>
<evidence type="ECO:0000269" key="2">
    <source>
    </source>
</evidence>
<evidence type="ECO:0000269" key="3">
    <source ref="7"/>
</evidence>
<evidence type="ECO:0000305" key="4"/>
<dbReference type="EC" id="1.1.1.44"/>
<dbReference type="EMBL" id="AF486280">
    <property type="protein sequence ID" value="AAL92029.1"/>
    <property type="molecule type" value="mRNA"/>
</dbReference>
<dbReference type="EMBL" id="AP001552">
    <property type="protein sequence ID" value="BAA93024.1"/>
    <property type="molecule type" value="Genomic_DNA"/>
</dbReference>
<dbReference type="EMBL" id="AP008212">
    <property type="protein sequence ID" value="BAF18500.1"/>
    <property type="molecule type" value="Genomic_DNA"/>
</dbReference>
<dbReference type="EMBL" id="AP014962">
    <property type="protein sequence ID" value="BAS95792.1"/>
    <property type="molecule type" value="Genomic_DNA"/>
</dbReference>
<dbReference type="EMBL" id="CM000143">
    <property type="protein sequence ID" value="EAZ35578.1"/>
    <property type="molecule type" value="Genomic_DNA"/>
</dbReference>
<dbReference type="EMBL" id="AK065920">
    <property type="protein sequence ID" value="BAG89736.1"/>
    <property type="molecule type" value="mRNA"/>
</dbReference>
<dbReference type="RefSeq" id="XP_015642949.1">
    <property type="nucleotide sequence ID" value="XM_015787463.1"/>
</dbReference>
<dbReference type="RefSeq" id="XP_015642950.1">
    <property type="nucleotide sequence ID" value="XM_015787464.1"/>
</dbReference>
<dbReference type="SMR" id="Q9LI00"/>
<dbReference type="FunCoup" id="Q9LI00">
    <property type="interactions" value="2813"/>
</dbReference>
<dbReference type="STRING" id="39947.Q9LI00"/>
<dbReference type="PaxDb" id="39947-Q9LI00"/>
<dbReference type="EnsemblPlants" id="Os06t0111500-01">
    <property type="protein sequence ID" value="Os06t0111500-01"/>
    <property type="gene ID" value="Os06g0111500"/>
</dbReference>
<dbReference type="Gramene" id="Os06t0111500-01">
    <property type="protein sequence ID" value="Os06t0111500-01"/>
    <property type="gene ID" value="Os06g0111500"/>
</dbReference>
<dbReference type="KEGG" id="dosa:Os06g0111500"/>
<dbReference type="eggNOG" id="KOG2653">
    <property type="taxonomic scope" value="Eukaryota"/>
</dbReference>
<dbReference type="HOGENOM" id="CLU_024540_4_2_1"/>
<dbReference type="InParanoid" id="Q9LI00"/>
<dbReference type="OMA" id="CVTHVGP"/>
<dbReference type="OrthoDB" id="434986at2759"/>
<dbReference type="BRENDA" id="1.1.1.44">
    <property type="organism ID" value="4460"/>
</dbReference>
<dbReference type="UniPathway" id="UPA00115">
    <property type="reaction ID" value="UER00410"/>
</dbReference>
<dbReference type="Proteomes" id="UP000000763">
    <property type="component" value="Chromosome 6"/>
</dbReference>
<dbReference type="Proteomes" id="UP000007752">
    <property type="component" value="Chromosome 6"/>
</dbReference>
<dbReference type="Proteomes" id="UP000059680">
    <property type="component" value="Chromosome 6"/>
</dbReference>
<dbReference type="ExpressionAtlas" id="Q9LI00">
    <property type="expression patterns" value="baseline and differential"/>
</dbReference>
<dbReference type="GO" id="GO:0005829">
    <property type="term" value="C:cytosol"/>
    <property type="evidence" value="ECO:0000318"/>
    <property type="project" value="GO_Central"/>
</dbReference>
<dbReference type="GO" id="GO:0050661">
    <property type="term" value="F:NADP binding"/>
    <property type="evidence" value="ECO:0000318"/>
    <property type="project" value="GO_Central"/>
</dbReference>
<dbReference type="GO" id="GO:0004616">
    <property type="term" value="F:phosphogluconate dehydrogenase (decarboxylating) activity"/>
    <property type="evidence" value="ECO:0000318"/>
    <property type="project" value="GO_Central"/>
</dbReference>
<dbReference type="GO" id="GO:0019521">
    <property type="term" value="P:D-gluconate metabolic process"/>
    <property type="evidence" value="ECO:0007669"/>
    <property type="project" value="UniProtKB-KW"/>
</dbReference>
<dbReference type="GO" id="GO:0009051">
    <property type="term" value="P:pentose-phosphate shunt, oxidative branch"/>
    <property type="evidence" value="ECO:0000318"/>
    <property type="project" value="GO_Central"/>
</dbReference>
<dbReference type="GO" id="GO:0009737">
    <property type="term" value="P:response to abscisic acid"/>
    <property type="evidence" value="ECO:0000270"/>
    <property type="project" value="UniProtKB"/>
</dbReference>
<dbReference type="GO" id="GO:0009409">
    <property type="term" value="P:response to cold"/>
    <property type="evidence" value="ECO:0000270"/>
    <property type="project" value="UniProtKB"/>
</dbReference>
<dbReference type="GO" id="GO:0009651">
    <property type="term" value="P:response to salt stress"/>
    <property type="evidence" value="ECO:0000270"/>
    <property type="project" value="UniProtKB"/>
</dbReference>
<dbReference type="GO" id="GO:0009414">
    <property type="term" value="P:response to water deprivation"/>
    <property type="evidence" value="ECO:0000270"/>
    <property type="project" value="UniProtKB"/>
</dbReference>
<dbReference type="FunFam" id="1.10.1040.10:FF:000002">
    <property type="entry name" value="6-phosphogluconate dehydrogenase, decarboxylating"/>
    <property type="match status" value="1"/>
</dbReference>
<dbReference type="FunFam" id="1.20.5.320:FF:000001">
    <property type="entry name" value="6-phosphogluconate dehydrogenase, decarboxylating"/>
    <property type="match status" value="1"/>
</dbReference>
<dbReference type="FunFam" id="3.40.50.720:FF:000007">
    <property type="entry name" value="6-phosphogluconate dehydrogenase, decarboxylating"/>
    <property type="match status" value="1"/>
</dbReference>
<dbReference type="Gene3D" id="1.20.5.320">
    <property type="entry name" value="6-Phosphogluconate Dehydrogenase, domain 3"/>
    <property type="match status" value="1"/>
</dbReference>
<dbReference type="Gene3D" id="1.10.1040.10">
    <property type="entry name" value="N-(1-d-carboxylethyl)-l-norvaline Dehydrogenase, domain 2"/>
    <property type="match status" value="1"/>
</dbReference>
<dbReference type="Gene3D" id="3.40.50.720">
    <property type="entry name" value="NAD(P)-binding Rossmann-like Domain"/>
    <property type="match status" value="1"/>
</dbReference>
<dbReference type="InterPro" id="IPR008927">
    <property type="entry name" value="6-PGluconate_DH-like_C_sf"/>
</dbReference>
<dbReference type="InterPro" id="IPR013328">
    <property type="entry name" value="6PGD_dom2"/>
</dbReference>
<dbReference type="InterPro" id="IPR006114">
    <property type="entry name" value="6PGDH_C"/>
</dbReference>
<dbReference type="InterPro" id="IPR006113">
    <property type="entry name" value="6PGDH_Gnd/GntZ"/>
</dbReference>
<dbReference type="InterPro" id="IPR006115">
    <property type="entry name" value="6PGDH_NADP-bd"/>
</dbReference>
<dbReference type="InterPro" id="IPR036291">
    <property type="entry name" value="NAD(P)-bd_dom_sf"/>
</dbReference>
<dbReference type="InterPro" id="IPR006183">
    <property type="entry name" value="Pgluconate_DH"/>
</dbReference>
<dbReference type="NCBIfam" id="TIGR00873">
    <property type="entry name" value="gnd"/>
    <property type="match status" value="1"/>
</dbReference>
<dbReference type="NCBIfam" id="NF006765">
    <property type="entry name" value="PRK09287.1"/>
    <property type="match status" value="1"/>
</dbReference>
<dbReference type="PANTHER" id="PTHR11811">
    <property type="entry name" value="6-PHOSPHOGLUCONATE DEHYDROGENASE"/>
    <property type="match status" value="1"/>
</dbReference>
<dbReference type="Pfam" id="PF00393">
    <property type="entry name" value="6PGD"/>
    <property type="match status" value="1"/>
</dbReference>
<dbReference type="Pfam" id="PF03446">
    <property type="entry name" value="NAD_binding_2"/>
    <property type="match status" value="1"/>
</dbReference>
<dbReference type="PIRSF" id="PIRSF000109">
    <property type="entry name" value="6PGD"/>
    <property type="match status" value="1"/>
</dbReference>
<dbReference type="PRINTS" id="PR00076">
    <property type="entry name" value="6PGDHDRGNASE"/>
</dbReference>
<dbReference type="SMART" id="SM01350">
    <property type="entry name" value="6PGD"/>
    <property type="match status" value="1"/>
</dbReference>
<dbReference type="SUPFAM" id="SSF48179">
    <property type="entry name" value="6-phosphogluconate dehydrogenase C-terminal domain-like"/>
    <property type="match status" value="1"/>
</dbReference>
<dbReference type="SUPFAM" id="SSF51735">
    <property type="entry name" value="NAD(P)-binding Rossmann-fold domains"/>
    <property type="match status" value="1"/>
</dbReference>
<name>6PGD1_ORYSJ</name>
<sequence>MAVTRIGLAGLAVMGQNLALNIAEKGFPISVYNRTTSKVDETVQRAKVEGNLPVYGFHDPASFVNSIQKPRVVIMLVKAGAPVDQTIATLAAHLEQGDCIIDGGNEWYENTERREKAMEERGLLYLGMGVSGGEEGARNGPSLMPGGSFEAYKYIEDILLKVAAQVPDSGPCVTYIGKGGSGNFVKMVHNGIEYGDMQLISEAYDVLKSVGKLTNSELQQVFSEWNKGELLSFLIEITADIFSIKDDQGSGHLVDKVLDKTGMKGTGKWTVQQAAELSVAAPTIEASLDSRFLSGLKDERVEAAKVFQGDFSSNLPVDKAQLIEDVRQALYASKICSYAQGMNIIKAKSMEKGWSLNLGELARIWKGGCIIRAIFLDRIKKAYDRNSDLANLLVDPEFAQEIMDRQAAWRRVVCLAINNGVSTPGMSASLAYFDSYRRDRLPANLVQAQRDYFGAHTYERVDMPGSFHTEWFKIARAAKM</sequence>
<reference key="1">
    <citation type="journal article" date="2003" name="Mol. Biol. Rep.">
        <title>Molecular cloning and characterization of rice 6-phosphogluconate dehydrogenase gene that is up-regulated by salt stress.</title>
        <authorList>
            <person name="Huang J."/>
            <person name="Zhang H."/>
            <person name="Wang J."/>
            <person name="Yang J."/>
        </authorList>
    </citation>
    <scope>NUCLEOTIDE SEQUENCE [MRNA]</scope>
    <scope>TISSUE SPECIFICITY</scope>
    <scope>INDUCTION BY SALT</scope>
    <source>
        <strain>cv. Jiu Caiqing</strain>
        <tissue>Seedling</tissue>
    </source>
</reference>
<reference key="2">
    <citation type="journal article" date="2005" name="Nature">
        <title>The map-based sequence of the rice genome.</title>
        <authorList>
            <consortium name="International rice genome sequencing project (IRGSP)"/>
        </authorList>
    </citation>
    <scope>NUCLEOTIDE SEQUENCE [LARGE SCALE GENOMIC DNA]</scope>
    <source>
        <strain>cv. Nipponbare</strain>
    </source>
</reference>
<reference key="3">
    <citation type="journal article" date="2008" name="Nucleic Acids Res.">
        <title>The rice annotation project database (RAP-DB): 2008 update.</title>
        <authorList>
            <consortium name="The rice annotation project (RAP)"/>
        </authorList>
    </citation>
    <scope>GENOME REANNOTATION</scope>
    <source>
        <strain>cv. Nipponbare</strain>
    </source>
</reference>
<reference key="4">
    <citation type="journal article" date="2013" name="Rice">
        <title>Improvement of the Oryza sativa Nipponbare reference genome using next generation sequence and optical map data.</title>
        <authorList>
            <person name="Kawahara Y."/>
            <person name="de la Bastide M."/>
            <person name="Hamilton J.P."/>
            <person name="Kanamori H."/>
            <person name="McCombie W.R."/>
            <person name="Ouyang S."/>
            <person name="Schwartz D.C."/>
            <person name="Tanaka T."/>
            <person name="Wu J."/>
            <person name="Zhou S."/>
            <person name="Childs K.L."/>
            <person name="Davidson R.M."/>
            <person name="Lin H."/>
            <person name="Quesada-Ocampo L."/>
            <person name="Vaillancourt B."/>
            <person name="Sakai H."/>
            <person name="Lee S.S."/>
            <person name="Kim J."/>
            <person name="Numa H."/>
            <person name="Itoh T."/>
            <person name="Buell C.R."/>
            <person name="Matsumoto T."/>
        </authorList>
    </citation>
    <scope>GENOME REANNOTATION</scope>
    <source>
        <strain>cv. Nipponbare</strain>
    </source>
</reference>
<reference key="5">
    <citation type="journal article" date="2005" name="PLoS Biol.">
        <title>The genomes of Oryza sativa: a history of duplications.</title>
        <authorList>
            <person name="Yu J."/>
            <person name="Wang J."/>
            <person name="Lin W."/>
            <person name="Li S."/>
            <person name="Li H."/>
            <person name="Zhou J."/>
            <person name="Ni P."/>
            <person name="Dong W."/>
            <person name="Hu S."/>
            <person name="Zeng C."/>
            <person name="Zhang J."/>
            <person name="Zhang Y."/>
            <person name="Li R."/>
            <person name="Xu Z."/>
            <person name="Li S."/>
            <person name="Li X."/>
            <person name="Zheng H."/>
            <person name="Cong L."/>
            <person name="Lin L."/>
            <person name="Yin J."/>
            <person name="Geng J."/>
            <person name="Li G."/>
            <person name="Shi J."/>
            <person name="Liu J."/>
            <person name="Lv H."/>
            <person name="Li J."/>
            <person name="Wang J."/>
            <person name="Deng Y."/>
            <person name="Ran L."/>
            <person name="Shi X."/>
            <person name="Wang X."/>
            <person name="Wu Q."/>
            <person name="Li C."/>
            <person name="Ren X."/>
            <person name="Wang J."/>
            <person name="Wang X."/>
            <person name="Li D."/>
            <person name="Liu D."/>
            <person name="Zhang X."/>
            <person name="Ji Z."/>
            <person name="Zhao W."/>
            <person name="Sun Y."/>
            <person name="Zhang Z."/>
            <person name="Bao J."/>
            <person name="Han Y."/>
            <person name="Dong L."/>
            <person name="Ji J."/>
            <person name="Chen P."/>
            <person name="Wu S."/>
            <person name="Liu J."/>
            <person name="Xiao Y."/>
            <person name="Bu D."/>
            <person name="Tan J."/>
            <person name="Yang L."/>
            <person name="Ye C."/>
            <person name="Zhang J."/>
            <person name="Xu J."/>
            <person name="Zhou Y."/>
            <person name="Yu Y."/>
            <person name="Zhang B."/>
            <person name="Zhuang S."/>
            <person name="Wei H."/>
            <person name="Liu B."/>
            <person name="Lei M."/>
            <person name="Yu H."/>
            <person name="Li Y."/>
            <person name="Xu H."/>
            <person name="Wei S."/>
            <person name="He X."/>
            <person name="Fang L."/>
            <person name="Zhang Z."/>
            <person name="Zhang Y."/>
            <person name="Huang X."/>
            <person name="Su Z."/>
            <person name="Tong W."/>
            <person name="Li J."/>
            <person name="Tong Z."/>
            <person name="Li S."/>
            <person name="Ye J."/>
            <person name="Wang L."/>
            <person name="Fang L."/>
            <person name="Lei T."/>
            <person name="Chen C.-S."/>
            <person name="Chen H.-C."/>
            <person name="Xu Z."/>
            <person name="Li H."/>
            <person name="Huang H."/>
            <person name="Zhang F."/>
            <person name="Xu H."/>
            <person name="Li N."/>
            <person name="Zhao C."/>
            <person name="Li S."/>
            <person name="Dong L."/>
            <person name="Huang Y."/>
            <person name="Li L."/>
            <person name="Xi Y."/>
            <person name="Qi Q."/>
            <person name="Li W."/>
            <person name="Zhang B."/>
            <person name="Hu W."/>
            <person name="Zhang Y."/>
            <person name="Tian X."/>
            <person name="Jiao Y."/>
            <person name="Liang X."/>
            <person name="Jin J."/>
            <person name="Gao L."/>
            <person name="Zheng W."/>
            <person name="Hao B."/>
            <person name="Liu S.-M."/>
            <person name="Wang W."/>
            <person name="Yuan L."/>
            <person name="Cao M."/>
            <person name="McDermott J."/>
            <person name="Samudrala R."/>
            <person name="Wang J."/>
            <person name="Wong G.K.-S."/>
            <person name="Yang H."/>
        </authorList>
    </citation>
    <scope>NUCLEOTIDE SEQUENCE [LARGE SCALE GENOMIC DNA]</scope>
    <source>
        <strain>cv. Nipponbare</strain>
    </source>
</reference>
<reference key="6">
    <citation type="journal article" date="2003" name="Science">
        <title>Collection, mapping, and annotation of over 28,000 cDNA clones from japonica rice.</title>
        <authorList>
            <consortium name="The rice full-length cDNA consortium"/>
        </authorList>
    </citation>
    <scope>NUCLEOTIDE SEQUENCE [LARGE SCALE MRNA]</scope>
    <source>
        <strain>cv. Nipponbare</strain>
    </source>
</reference>
<reference key="7">
    <citation type="journal article" date="2007" name="J. Integr. Plant Biol.">
        <title>The 6-phosphogluconate dehydrogenase genes are responsive to abiotic stresses in rice.</title>
        <authorList>
            <person name="Hou F.-Y."/>
            <person name="Huang J."/>
            <person name="Yu S.-L."/>
            <person name="Zhang H.-S."/>
        </authorList>
    </citation>
    <scope>INDUCTION</scope>
    <source>
        <strain>cv. Jiu Caiqing</strain>
    </source>
</reference>
<keyword id="KW-0963">Cytoplasm</keyword>
<keyword id="KW-0311">Gluconate utilization</keyword>
<keyword id="KW-0521">NADP</keyword>
<keyword id="KW-0560">Oxidoreductase</keyword>
<keyword id="KW-0570">Pentose shunt</keyword>
<keyword id="KW-1185">Reference proteome</keyword>
<feature type="chain" id="PRO_0000421101" description="6-phosphogluconate dehydrogenase, decarboxylating 1">
    <location>
        <begin position="1"/>
        <end position="480"/>
    </location>
</feature>
<feature type="active site" description="Proton acceptor" evidence="1">
    <location>
        <position position="186"/>
    </location>
</feature>
<feature type="active site" description="Proton donor" evidence="1">
    <location>
        <position position="193"/>
    </location>
</feature>
<feature type="binding site" evidence="1">
    <location>
        <begin position="10"/>
        <end position="15"/>
    </location>
    <ligand>
        <name>NADP(+)</name>
        <dbReference type="ChEBI" id="CHEBI:58349"/>
    </ligand>
</feature>
<feature type="binding site" evidence="1">
    <location>
        <begin position="33"/>
        <end position="35"/>
    </location>
    <ligand>
        <name>NADP(+)</name>
        <dbReference type="ChEBI" id="CHEBI:58349"/>
    </ligand>
</feature>
<feature type="binding site" evidence="1">
    <location>
        <begin position="77"/>
        <end position="79"/>
    </location>
    <ligand>
        <name>NADP(+)</name>
        <dbReference type="ChEBI" id="CHEBI:58349"/>
    </ligand>
</feature>
<feature type="binding site" evidence="1">
    <location>
        <position position="105"/>
    </location>
    <ligand>
        <name>NADP(+)</name>
        <dbReference type="ChEBI" id="CHEBI:58349"/>
    </ligand>
</feature>
<feature type="binding site" description="in other chain" evidence="1">
    <location>
        <position position="105"/>
    </location>
    <ligand>
        <name>substrate</name>
        <note>ligand shared between dimeric partners</note>
    </ligand>
</feature>
<feature type="binding site" description="in other chain" evidence="1">
    <location>
        <begin position="131"/>
        <end position="133"/>
    </location>
    <ligand>
        <name>substrate</name>
        <note>ligand shared between dimeric partners</note>
    </ligand>
</feature>
<feature type="binding site" description="in other chain" evidence="1">
    <location>
        <begin position="189"/>
        <end position="190"/>
    </location>
    <ligand>
        <name>substrate</name>
        <note>ligand shared between dimeric partners</note>
    </ligand>
</feature>
<feature type="binding site" description="in other chain" evidence="1">
    <location>
        <position position="194"/>
    </location>
    <ligand>
        <name>substrate</name>
        <note>ligand shared between dimeric partners</note>
    </ligand>
</feature>
<feature type="binding site" description="in other chain" evidence="1">
    <location>
        <position position="264"/>
    </location>
    <ligand>
        <name>substrate</name>
        <note>ligand shared between dimeric partners</note>
    </ligand>
</feature>
<feature type="binding site" description="in other chain" evidence="1">
    <location>
        <position position="291"/>
    </location>
    <ligand>
        <name>substrate</name>
        <note>ligand shared between dimeric partners</note>
    </ligand>
</feature>
<feature type="binding site" evidence="1">
    <location>
        <position position="450"/>
    </location>
    <ligand>
        <name>substrate</name>
        <note>ligand shared between dimeric partners</note>
    </ligand>
</feature>
<feature type="binding site" evidence="1">
    <location>
        <position position="456"/>
    </location>
    <ligand>
        <name>substrate</name>
        <note>ligand shared between dimeric partners</note>
    </ligand>
</feature>
<comment type="function">
    <text evidence="1">Catalyzes the oxidative decarboxylation of 6-phosphogluconate to ribulose 5-phosphate and CO(2), with concomitant reduction of NADP to NADPH.</text>
</comment>
<comment type="catalytic activity">
    <reaction>
        <text>6-phospho-D-gluconate + NADP(+) = D-ribulose 5-phosphate + CO2 + NADPH</text>
        <dbReference type="Rhea" id="RHEA:10116"/>
        <dbReference type="ChEBI" id="CHEBI:16526"/>
        <dbReference type="ChEBI" id="CHEBI:57783"/>
        <dbReference type="ChEBI" id="CHEBI:58121"/>
        <dbReference type="ChEBI" id="CHEBI:58349"/>
        <dbReference type="ChEBI" id="CHEBI:58759"/>
        <dbReference type="EC" id="1.1.1.44"/>
    </reaction>
</comment>
<comment type="pathway">
    <text>Carbohydrate degradation; pentose phosphate pathway; D-ribulose 5-phosphate from D-glucose 6-phosphate (oxidative stage): step 3/3.</text>
</comment>
<comment type="subunit">
    <text evidence="1">Homodimer.</text>
</comment>
<comment type="subcellular location">
    <subcellularLocation>
        <location evidence="1">Cytoplasm</location>
    </subcellularLocation>
</comment>
<comment type="tissue specificity">
    <text evidence="2">Highly expressed in inflorescence, lowly expressed in root and embryos and almost absent in leaves.</text>
</comment>
<comment type="induction">
    <text evidence="2 3">By drought, cold, high salinity and abscisic acid (ABA) treatments.</text>
</comment>
<comment type="similarity">
    <text evidence="4">Belongs to the 6-phosphogluconate dehydrogenase family.</text>
</comment>
<organism>
    <name type="scientific">Oryza sativa subsp. japonica</name>
    <name type="common">Rice</name>
    <dbReference type="NCBI Taxonomy" id="39947"/>
    <lineage>
        <taxon>Eukaryota</taxon>
        <taxon>Viridiplantae</taxon>
        <taxon>Streptophyta</taxon>
        <taxon>Embryophyta</taxon>
        <taxon>Tracheophyta</taxon>
        <taxon>Spermatophyta</taxon>
        <taxon>Magnoliopsida</taxon>
        <taxon>Liliopsida</taxon>
        <taxon>Poales</taxon>
        <taxon>Poaceae</taxon>
        <taxon>BOP clade</taxon>
        <taxon>Oryzoideae</taxon>
        <taxon>Oryzeae</taxon>
        <taxon>Oryzinae</taxon>
        <taxon>Oryza</taxon>
        <taxon>Oryza sativa</taxon>
    </lineage>
</organism>
<gene>
    <name type="primary">G6PGH1</name>
    <name type="ordered locus">Os06g0111500</name>
    <name type="ordered locus">LOC_Os06g02144</name>
    <name type="ORF">OsJ_19864</name>
    <name type="ORF">P0029D06.14-1</name>
</gene>